<gene>
    <name type="primary">popdc1</name>
    <name type="synonym">bves</name>
    <name type="synonym">pop1</name>
</gene>
<protein>
    <recommendedName>
        <fullName>Popeye domain-containing protein 1</fullName>
        <shortName>Popeye protein 1</shortName>
    </recommendedName>
    <alternativeName>
        <fullName>Blood vessel epicardial substance</fullName>
        <shortName>hBVES</shortName>
    </alternativeName>
</protein>
<accession>B1H1G2</accession>
<sequence>MATESILITTLPMDLNSQINNVTFGLNENETLCENWREIHHLVFHLANTCFAAGLVIPSTLNLHMILLRGMLCLGCIFFIIWAILFRCALDIMIWNATFLSMNFMHFIYLVYKKRPIKIEKDLKGIYHRMFEPLHVSPELFNRLTGQFCEIKTLAKGQTYAIEDKTSVDDRLSILLKGIMKVSYRGHFLHAISPNAYIDSPEFRSTEMNRGETFQVTITADDNCVFLCWSRERLTYFLESEPFLYEIFKYLIGKDITTKLYSLNDPTLGKKKKLDTQPSLCSQLSVMEMRNSLASTSDNEDGLQTFLRGTSTTSSQRNNQQEFCNAYGVGPLSHAVFC</sequence>
<organism>
    <name type="scientific">Xenopus tropicalis</name>
    <name type="common">Western clawed frog</name>
    <name type="synonym">Silurana tropicalis</name>
    <dbReference type="NCBI Taxonomy" id="8364"/>
    <lineage>
        <taxon>Eukaryota</taxon>
        <taxon>Metazoa</taxon>
        <taxon>Chordata</taxon>
        <taxon>Craniata</taxon>
        <taxon>Vertebrata</taxon>
        <taxon>Euteleostomi</taxon>
        <taxon>Amphibia</taxon>
        <taxon>Batrachia</taxon>
        <taxon>Anura</taxon>
        <taxon>Pipoidea</taxon>
        <taxon>Pipidae</taxon>
        <taxon>Xenopodinae</taxon>
        <taxon>Xenopus</taxon>
        <taxon>Silurana</taxon>
    </lineage>
</organism>
<name>POPD1_XENTR</name>
<proteinExistence type="evidence at transcript level"/>
<reference key="1">
    <citation type="submission" date="2008-03" db="EMBL/GenBank/DDBJ databases">
        <authorList>
            <consortium name="NIH - Xenopus Gene Collection (XGC) project"/>
        </authorList>
    </citation>
    <scope>NUCLEOTIDE SEQUENCE [LARGE SCALE MRNA]</scope>
    <source>
        <strain>N6</strain>
        <tissue>Ovary</tissue>
    </source>
</reference>
<dbReference type="EMBL" id="BC160594">
    <property type="protein sequence ID" value="AAI60594.1"/>
    <property type="molecule type" value="mRNA"/>
</dbReference>
<dbReference type="RefSeq" id="NP_001116888.1">
    <property type="nucleotide sequence ID" value="NM_001123416.1"/>
</dbReference>
<dbReference type="SMR" id="B1H1G2"/>
<dbReference type="FunCoup" id="B1H1G2">
    <property type="interactions" value="728"/>
</dbReference>
<dbReference type="STRING" id="8364.ENSXETP00000011542"/>
<dbReference type="GlyCosmos" id="B1H1G2">
    <property type="glycosylation" value="2 sites, No reported glycans"/>
</dbReference>
<dbReference type="PaxDb" id="8364-ENSXETP00000029138"/>
<dbReference type="GeneID" id="100144641"/>
<dbReference type="KEGG" id="xtr:100144641"/>
<dbReference type="AGR" id="Xenbase:XB-GENE-484277"/>
<dbReference type="CTD" id="11149"/>
<dbReference type="Xenbase" id="XB-GENE-484277">
    <property type="gene designation" value="popdc1"/>
</dbReference>
<dbReference type="eggNOG" id="ENOG502QRV2">
    <property type="taxonomic scope" value="Eukaryota"/>
</dbReference>
<dbReference type="HOGENOM" id="CLU_048494_0_0_1"/>
<dbReference type="InParanoid" id="B1H1G2"/>
<dbReference type="OrthoDB" id="425611at2759"/>
<dbReference type="TreeFam" id="TF326644"/>
<dbReference type="Proteomes" id="UP000008143">
    <property type="component" value="Chromosome 5"/>
</dbReference>
<dbReference type="ExpressionAtlas" id="B1H1G2">
    <property type="expression patterns" value="differential"/>
</dbReference>
<dbReference type="GO" id="GO:0005923">
    <property type="term" value="C:bicellular tight junction"/>
    <property type="evidence" value="ECO:0000250"/>
    <property type="project" value="UniProtKB"/>
</dbReference>
<dbReference type="GO" id="GO:0005901">
    <property type="term" value="C:caveola"/>
    <property type="evidence" value="ECO:0000250"/>
    <property type="project" value="UniProtKB"/>
</dbReference>
<dbReference type="GO" id="GO:0016328">
    <property type="term" value="C:lateral plasma membrane"/>
    <property type="evidence" value="ECO:0000250"/>
    <property type="project" value="UniProtKB"/>
</dbReference>
<dbReference type="GO" id="GO:0016020">
    <property type="term" value="C:membrane"/>
    <property type="evidence" value="ECO:0000250"/>
    <property type="project" value="UniProtKB"/>
</dbReference>
<dbReference type="GO" id="GO:0005886">
    <property type="term" value="C:plasma membrane"/>
    <property type="evidence" value="ECO:0000250"/>
    <property type="project" value="UniProtKB"/>
</dbReference>
<dbReference type="GO" id="GO:0042383">
    <property type="term" value="C:sarcolemma"/>
    <property type="evidence" value="ECO:0000250"/>
    <property type="project" value="UniProtKB"/>
</dbReference>
<dbReference type="GO" id="GO:0030552">
    <property type="term" value="F:cAMP binding"/>
    <property type="evidence" value="ECO:0007669"/>
    <property type="project" value="UniProtKB-KW"/>
</dbReference>
<dbReference type="GO" id="GO:0005198">
    <property type="term" value="F:structural molecule activity"/>
    <property type="evidence" value="ECO:0000250"/>
    <property type="project" value="UniProtKB"/>
</dbReference>
<dbReference type="GO" id="GO:0090136">
    <property type="term" value="P:epithelial cell-cell adhesion"/>
    <property type="evidence" value="ECO:0000250"/>
    <property type="project" value="UniProtKB"/>
</dbReference>
<dbReference type="GO" id="GO:0007507">
    <property type="term" value="P:heart development"/>
    <property type="evidence" value="ECO:0000250"/>
    <property type="project" value="UniProtKB"/>
</dbReference>
<dbReference type="GO" id="GO:0040017">
    <property type="term" value="P:positive regulation of locomotion"/>
    <property type="evidence" value="ECO:0000250"/>
    <property type="project" value="UniProtKB"/>
</dbReference>
<dbReference type="GO" id="GO:0001921">
    <property type="term" value="P:positive regulation of receptor recycling"/>
    <property type="evidence" value="ECO:0000250"/>
    <property type="project" value="UniProtKB"/>
</dbReference>
<dbReference type="GO" id="GO:0008360">
    <property type="term" value="P:regulation of cell shape"/>
    <property type="evidence" value="ECO:0000250"/>
    <property type="project" value="UniProtKB"/>
</dbReference>
<dbReference type="GO" id="GO:0043087">
    <property type="term" value="P:regulation of GTPase activity"/>
    <property type="evidence" value="ECO:0000250"/>
    <property type="project" value="UniProtKB"/>
</dbReference>
<dbReference type="GO" id="GO:0002931">
    <property type="term" value="P:response to ischemia"/>
    <property type="evidence" value="ECO:0000250"/>
    <property type="project" value="UniProtKB"/>
</dbReference>
<dbReference type="GO" id="GO:0007519">
    <property type="term" value="P:skeletal muscle tissue development"/>
    <property type="evidence" value="ECO:0000250"/>
    <property type="project" value="UniProtKB"/>
</dbReference>
<dbReference type="GO" id="GO:0034446">
    <property type="term" value="P:substrate adhesion-dependent cell spreading"/>
    <property type="evidence" value="ECO:0000250"/>
    <property type="project" value="UniProtKB"/>
</dbReference>
<dbReference type="GO" id="GO:0016192">
    <property type="term" value="P:vesicle-mediated transport"/>
    <property type="evidence" value="ECO:0000250"/>
    <property type="project" value="UniProtKB"/>
</dbReference>
<dbReference type="FunFam" id="2.60.120.10:FF:000166">
    <property type="entry name" value="blood vessel epicardial substance isoform X1"/>
    <property type="match status" value="1"/>
</dbReference>
<dbReference type="Gene3D" id="2.60.120.10">
    <property type="entry name" value="Jelly Rolls"/>
    <property type="match status" value="1"/>
</dbReference>
<dbReference type="InterPro" id="IPR018490">
    <property type="entry name" value="cNMP-bd_dom_sf"/>
</dbReference>
<dbReference type="InterPro" id="IPR006916">
    <property type="entry name" value="POPDC1-3"/>
</dbReference>
<dbReference type="InterPro" id="IPR055272">
    <property type="entry name" value="POPDC1-3_dom"/>
</dbReference>
<dbReference type="InterPro" id="IPR014710">
    <property type="entry name" value="RmlC-like_jellyroll"/>
</dbReference>
<dbReference type="PANTHER" id="PTHR12101:SF17">
    <property type="entry name" value="BLOOD VESSEL EPICARDIAL SUBSTANCE"/>
    <property type="match status" value="1"/>
</dbReference>
<dbReference type="PANTHER" id="PTHR12101">
    <property type="entry name" value="POPEYE DOMAIN CONTAINING PROTEIN"/>
    <property type="match status" value="1"/>
</dbReference>
<dbReference type="Pfam" id="PF04831">
    <property type="entry name" value="POPDC1-3"/>
    <property type="match status" value="1"/>
</dbReference>
<dbReference type="SUPFAM" id="SSF51206">
    <property type="entry name" value="cAMP-binding domain-like"/>
    <property type="match status" value="1"/>
</dbReference>
<comment type="function">
    <text evidence="1 2 3">Cell adhesion molecule involved in the establishment and/or maintenance of cell integrity. May play a role in vamp3-mediated vesicular transport and recycling of different receptor molecules. May be involved in the formation and regulation of the tight junction (TJ) paracellular permeability barrier in epithelial cells. May induce primordial adhesive contact and aggregation of epithelial cells in a Ca(2+)-independent manner. May be involved in epithelial movement during corneal sheet formation and regeneration. May play a role in the regulation of cell shape and movement by modulating the Rho-GTPase activity. May be involved in skeletal muscle and heart development as well as in the maintenance of heart function. May also be involved in striated muscle regeneration and in the regulation of cell spreading (By similarity).</text>
</comment>
<comment type="subcellular location">
    <subcellularLocation>
        <location evidence="2">Lateral cell membrane</location>
    </subcellularLocation>
    <subcellularLocation>
        <location evidence="2">Cell junction</location>
        <location evidence="2">Tight junction</location>
    </subcellularLocation>
    <subcellularLocation>
        <location evidence="5">Membrane</location>
        <topology evidence="5">Multi-pass membrane protein</topology>
    </subcellularLocation>
    <subcellularLocation>
        <location evidence="3">Cell membrane</location>
        <location evidence="3">Sarcolemma</location>
    </subcellularLocation>
    <subcellularLocation>
        <location evidence="3">Membrane</location>
        <location evidence="3">Caveola</location>
    </subcellularLocation>
    <text evidence="1 3">Detected at points of cell-cell contact in confluent epithelial sheets. Colocalizes with components of the adherens and tight junctions (By similarity).</text>
</comment>
<comment type="similarity">
    <text evidence="5">Belongs to the popeye family.</text>
</comment>
<evidence type="ECO:0000250" key="1">
    <source>
        <dbReference type="UniProtKB" id="Q5PQZ7"/>
    </source>
</evidence>
<evidence type="ECO:0000250" key="2">
    <source>
        <dbReference type="UniProtKB" id="Q8NE79"/>
    </source>
</evidence>
<evidence type="ECO:0000250" key="3">
    <source>
        <dbReference type="UniProtKB" id="Q9ES83"/>
    </source>
</evidence>
<evidence type="ECO:0000255" key="4"/>
<evidence type="ECO:0000305" key="5"/>
<keyword id="KW-0114">cAMP</keyword>
<keyword id="KW-0116">cAMP-binding</keyword>
<keyword id="KW-0130">Cell adhesion</keyword>
<keyword id="KW-0965">Cell junction</keyword>
<keyword id="KW-1003">Cell membrane</keyword>
<keyword id="KW-0217">Developmental protein</keyword>
<keyword id="KW-0325">Glycoprotein</keyword>
<keyword id="KW-0472">Membrane</keyword>
<keyword id="KW-0547">Nucleotide-binding</keyword>
<keyword id="KW-1185">Reference proteome</keyword>
<keyword id="KW-0796">Tight junction</keyword>
<keyword id="KW-0812">Transmembrane</keyword>
<keyword id="KW-1133">Transmembrane helix</keyword>
<feature type="chain" id="PRO_0000394482" description="Popeye domain-containing protein 1">
    <location>
        <begin position="1"/>
        <end position="338"/>
    </location>
</feature>
<feature type="topological domain" description="Extracellular" evidence="4">
    <location>
        <begin position="1"/>
        <end position="40"/>
    </location>
</feature>
<feature type="transmembrane region" description="Helical" evidence="4">
    <location>
        <begin position="41"/>
        <end position="61"/>
    </location>
</feature>
<feature type="topological domain" description="Cytoplasmic" evidence="4">
    <location>
        <begin position="62"/>
        <end position="65"/>
    </location>
</feature>
<feature type="transmembrane region" description="Helical" evidence="4">
    <location>
        <begin position="66"/>
        <end position="86"/>
    </location>
</feature>
<feature type="topological domain" description="Extracellular" evidence="4">
    <location>
        <begin position="87"/>
        <end position="91"/>
    </location>
</feature>
<feature type="transmembrane region" description="Helical" evidence="4">
    <location>
        <begin position="92"/>
        <end position="112"/>
    </location>
</feature>
<feature type="topological domain" description="Cytoplasmic" evidence="4">
    <location>
        <begin position="113"/>
        <end position="338"/>
    </location>
</feature>
<feature type="glycosylation site" description="N-linked (GlcNAc...) asparagine" evidence="4">
    <location>
        <position position="21"/>
    </location>
</feature>
<feature type="glycosylation site" description="N-linked (GlcNAc...) asparagine" evidence="4">
    <location>
        <position position="29"/>
    </location>
</feature>